<protein>
    <recommendedName>
        <fullName evidence="1">ATP synthase subunit beta</fullName>
        <ecNumber evidence="1">7.1.2.2</ecNumber>
    </recommendedName>
    <alternativeName>
        <fullName evidence="1">ATP synthase F1 sector subunit beta</fullName>
    </alternativeName>
    <alternativeName>
        <fullName evidence="1">F-ATPase subunit beta</fullName>
    </alternativeName>
</protein>
<gene>
    <name evidence="1" type="primary">atpD</name>
    <name type="ordered locus">MCAP_0084</name>
</gene>
<proteinExistence type="inferred from homology"/>
<comment type="function">
    <text evidence="1">Produces ATP from ADP in the presence of a proton gradient across the membrane. The catalytic sites are hosted primarily by the beta subunits.</text>
</comment>
<comment type="catalytic activity">
    <reaction evidence="1">
        <text>ATP + H2O + 4 H(+)(in) = ADP + phosphate + 5 H(+)(out)</text>
        <dbReference type="Rhea" id="RHEA:57720"/>
        <dbReference type="ChEBI" id="CHEBI:15377"/>
        <dbReference type="ChEBI" id="CHEBI:15378"/>
        <dbReference type="ChEBI" id="CHEBI:30616"/>
        <dbReference type="ChEBI" id="CHEBI:43474"/>
        <dbReference type="ChEBI" id="CHEBI:456216"/>
        <dbReference type="EC" id="7.1.2.2"/>
    </reaction>
</comment>
<comment type="subunit">
    <text evidence="1">F-type ATPases have 2 components, CF(1) - the catalytic core - and CF(0) - the membrane proton channel. CF(1) has five subunits: alpha(3), beta(3), gamma(1), delta(1), epsilon(1). CF(0) has three main subunits: a(1), b(2) and c(9-12). The alpha and beta chains form an alternating ring which encloses part of the gamma chain. CF(1) is attached to CF(0) by a central stalk formed by the gamma and epsilon chains, while a peripheral stalk is formed by the delta and b chains.</text>
</comment>
<comment type="subcellular location">
    <subcellularLocation>
        <location evidence="1">Cell membrane</location>
        <topology evidence="1">Peripheral membrane protein</topology>
    </subcellularLocation>
</comment>
<comment type="similarity">
    <text evidence="1">Belongs to the ATPase alpha/beta chains family.</text>
</comment>
<sequence>MVSSKKTIDKNKTQVIGKIIQVLGPVVDVKFSENNIPKIYDALVVDNNGKKLVLEVEQNIGDEIVRTIAMGPTEGLRRGLDVINTNSPITAPVGNEVLGRMFNVLGDPIDEKPDLDVKRLPIHRDAPIYEELVTTTEILETGIKVIDLMIPFTKGGKVGLFGGAGVGKTILIQELINNIAKAHNGVSVFAGVGERTREGNDLYHEFIEAGVLNKTCLVFGQMNEPPGARMRVALTGLTIAEYFRDKKNMDVLLFIDNIFRFTQAGSEVSALLGRMPSAVGYQPTLSTEMGSLQERITSTKNGSITSVQAVYVPADDLTDPAPATTFTHLDARIVLDRSIASLGIYPAVDPLASSSRVLDPEIVGQEHYDIALKVQITLQKYQELQSIIAILGMDELSEEDKLIVQRARKIRNFLSQSFFVGEKFTGRPGVFVKVSDTVRSFKSILNGEVDHVPETYFLYSSTIDNVIEKYNKDKDK</sequence>
<organism>
    <name type="scientific">Mycoplasma capricolum subsp. capricolum (strain California kid / ATCC 27343 / NCTC 10154)</name>
    <dbReference type="NCBI Taxonomy" id="340047"/>
    <lineage>
        <taxon>Bacteria</taxon>
        <taxon>Bacillati</taxon>
        <taxon>Mycoplasmatota</taxon>
        <taxon>Mollicutes</taxon>
        <taxon>Mycoplasmataceae</taxon>
        <taxon>Mycoplasma</taxon>
    </lineage>
</organism>
<name>ATPB_MYCCT</name>
<evidence type="ECO:0000255" key="1">
    <source>
        <dbReference type="HAMAP-Rule" id="MF_01347"/>
    </source>
</evidence>
<reference key="1">
    <citation type="submission" date="2005-09" db="EMBL/GenBank/DDBJ databases">
        <authorList>
            <person name="Glass J.I."/>
            <person name="Lartigue C."/>
            <person name="Pfannkoch C."/>
            <person name="Baden-Tillson H."/>
            <person name="Smith H.O."/>
            <person name="Venter J.C."/>
            <person name="Roske K."/>
            <person name="Wise K.S."/>
            <person name="Calcutt M.J."/>
            <person name="Nelson W.C."/>
            <person name="Nierman W.C."/>
        </authorList>
    </citation>
    <scope>NUCLEOTIDE SEQUENCE [LARGE SCALE GENOMIC DNA]</scope>
    <source>
        <strain>California kid / ATCC 27343 / NCTC 10154</strain>
    </source>
</reference>
<dbReference type="EC" id="7.1.2.2" evidence="1"/>
<dbReference type="EMBL" id="CP000123">
    <property type="protein sequence ID" value="ABC01548.1"/>
    <property type="molecule type" value="Genomic_DNA"/>
</dbReference>
<dbReference type="RefSeq" id="WP_011386984.1">
    <property type="nucleotide sequence ID" value="NC_007633.1"/>
</dbReference>
<dbReference type="SMR" id="Q2ST34"/>
<dbReference type="GeneID" id="23778961"/>
<dbReference type="KEGG" id="mcp:MCAP_0084"/>
<dbReference type="HOGENOM" id="CLU_022398_0_2_14"/>
<dbReference type="PhylomeDB" id="Q2ST34"/>
<dbReference type="Proteomes" id="UP000001928">
    <property type="component" value="Chromosome"/>
</dbReference>
<dbReference type="GO" id="GO:0005886">
    <property type="term" value="C:plasma membrane"/>
    <property type="evidence" value="ECO:0007669"/>
    <property type="project" value="UniProtKB-SubCell"/>
</dbReference>
<dbReference type="GO" id="GO:0045259">
    <property type="term" value="C:proton-transporting ATP synthase complex"/>
    <property type="evidence" value="ECO:0007669"/>
    <property type="project" value="UniProtKB-KW"/>
</dbReference>
<dbReference type="GO" id="GO:0005524">
    <property type="term" value="F:ATP binding"/>
    <property type="evidence" value="ECO:0007669"/>
    <property type="project" value="UniProtKB-UniRule"/>
</dbReference>
<dbReference type="GO" id="GO:0016887">
    <property type="term" value="F:ATP hydrolysis activity"/>
    <property type="evidence" value="ECO:0007669"/>
    <property type="project" value="InterPro"/>
</dbReference>
<dbReference type="GO" id="GO:0046933">
    <property type="term" value="F:proton-transporting ATP synthase activity, rotational mechanism"/>
    <property type="evidence" value="ECO:0007669"/>
    <property type="project" value="UniProtKB-UniRule"/>
</dbReference>
<dbReference type="CDD" id="cd18110">
    <property type="entry name" value="ATP-synt_F1_beta_C"/>
    <property type="match status" value="1"/>
</dbReference>
<dbReference type="CDD" id="cd18115">
    <property type="entry name" value="ATP-synt_F1_beta_N"/>
    <property type="match status" value="1"/>
</dbReference>
<dbReference type="CDD" id="cd01133">
    <property type="entry name" value="F1-ATPase_beta_CD"/>
    <property type="match status" value="1"/>
</dbReference>
<dbReference type="FunFam" id="1.10.1140.10:FF:000005">
    <property type="entry name" value="ATP synthase subunit beta"/>
    <property type="match status" value="1"/>
</dbReference>
<dbReference type="FunFam" id="3.40.50.300:FF:000004">
    <property type="entry name" value="ATP synthase subunit beta"/>
    <property type="match status" value="1"/>
</dbReference>
<dbReference type="Gene3D" id="2.40.10.170">
    <property type="match status" value="1"/>
</dbReference>
<dbReference type="Gene3D" id="1.10.1140.10">
    <property type="entry name" value="Bovine Mitochondrial F1-atpase, Atp Synthase Beta Chain, Chain D, domain 3"/>
    <property type="match status" value="1"/>
</dbReference>
<dbReference type="Gene3D" id="3.40.50.300">
    <property type="entry name" value="P-loop containing nucleotide triphosphate hydrolases"/>
    <property type="match status" value="1"/>
</dbReference>
<dbReference type="HAMAP" id="MF_01347">
    <property type="entry name" value="ATP_synth_beta_bact"/>
    <property type="match status" value="1"/>
</dbReference>
<dbReference type="InterPro" id="IPR003593">
    <property type="entry name" value="AAA+_ATPase"/>
</dbReference>
<dbReference type="InterPro" id="IPR055190">
    <property type="entry name" value="ATP-synt_VA_C"/>
</dbReference>
<dbReference type="InterPro" id="IPR005722">
    <property type="entry name" value="ATP_synth_F1_bsu"/>
</dbReference>
<dbReference type="InterPro" id="IPR020003">
    <property type="entry name" value="ATPase_a/bsu_AS"/>
</dbReference>
<dbReference type="InterPro" id="IPR050053">
    <property type="entry name" value="ATPase_alpha/beta_chains"/>
</dbReference>
<dbReference type="InterPro" id="IPR004100">
    <property type="entry name" value="ATPase_F1/V1/A1_a/bsu_N"/>
</dbReference>
<dbReference type="InterPro" id="IPR036121">
    <property type="entry name" value="ATPase_F1/V1/A1_a/bsu_N_sf"/>
</dbReference>
<dbReference type="InterPro" id="IPR000194">
    <property type="entry name" value="ATPase_F1/V1/A1_a/bsu_nucl-bd"/>
</dbReference>
<dbReference type="InterPro" id="IPR024034">
    <property type="entry name" value="ATPase_F1/V1_b/a_C"/>
</dbReference>
<dbReference type="InterPro" id="IPR027417">
    <property type="entry name" value="P-loop_NTPase"/>
</dbReference>
<dbReference type="NCBIfam" id="TIGR01039">
    <property type="entry name" value="atpD"/>
    <property type="match status" value="1"/>
</dbReference>
<dbReference type="PANTHER" id="PTHR15184">
    <property type="entry name" value="ATP SYNTHASE"/>
    <property type="match status" value="1"/>
</dbReference>
<dbReference type="PANTHER" id="PTHR15184:SF71">
    <property type="entry name" value="ATP SYNTHASE SUBUNIT BETA, MITOCHONDRIAL"/>
    <property type="match status" value="1"/>
</dbReference>
<dbReference type="Pfam" id="PF00006">
    <property type="entry name" value="ATP-synt_ab"/>
    <property type="match status" value="1"/>
</dbReference>
<dbReference type="Pfam" id="PF02874">
    <property type="entry name" value="ATP-synt_ab_N"/>
    <property type="match status" value="1"/>
</dbReference>
<dbReference type="Pfam" id="PF22919">
    <property type="entry name" value="ATP-synt_VA_C"/>
    <property type="match status" value="1"/>
</dbReference>
<dbReference type="SMART" id="SM00382">
    <property type="entry name" value="AAA"/>
    <property type="match status" value="1"/>
</dbReference>
<dbReference type="SUPFAM" id="SSF47917">
    <property type="entry name" value="C-terminal domain of alpha and beta subunits of F1 ATP synthase"/>
    <property type="match status" value="1"/>
</dbReference>
<dbReference type="SUPFAM" id="SSF50615">
    <property type="entry name" value="N-terminal domain of alpha and beta subunits of F1 ATP synthase"/>
    <property type="match status" value="1"/>
</dbReference>
<dbReference type="SUPFAM" id="SSF52540">
    <property type="entry name" value="P-loop containing nucleoside triphosphate hydrolases"/>
    <property type="match status" value="1"/>
</dbReference>
<dbReference type="PROSITE" id="PS00152">
    <property type="entry name" value="ATPASE_ALPHA_BETA"/>
    <property type="match status" value="1"/>
</dbReference>
<accession>Q2ST34</accession>
<feature type="chain" id="PRO_0000254301" description="ATP synthase subunit beta">
    <location>
        <begin position="1"/>
        <end position="476"/>
    </location>
</feature>
<feature type="binding site" evidence="1">
    <location>
        <begin position="162"/>
        <end position="169"/>
    </location>
    <ligand>
        <name>ATP</name>
        <dbReference type="ChEBI" id="CHEBI:30616"/>
    </ligand>
</feature>
<keyword id="KW-0066">ATP synthesis</keyword>
<keyword id="KW-0067">ATP-binding</keyword>
<keyword id="KW-1003">Cell membrane</keyword>
<keyword id="KW-0139">CF(1)</keyword>
<keyword id="KW-0375">Hydrogen ion transport</keyword>
<keyword id="KW-0406">Ion transport</keyword>
<keyword id="KW-0472">Membrane</keyword>
<keyword id="KW-0547">Nucleotide-binding</keyword>
<keyword id="KW-1278">Translocase</keyword>
<keyword id="KW-0813">Transport</keyword>